<dbReference type="EMBL" id="FM177140">
    <property type="protein sequence ID" value="CAQ67698.1"/>
    <property type="molecule type" value="Genomic_DNA"/>
</dbReference>
<dbReference type="SMR" id="B3WAH9"/>
<dbReference type="KEGG" id="lcb:LCABL_26320"/>
<dbReference type="HOGENOM" id="CLU_046483_2_1_9"/>
<dbReference type="GO" id="GO:0022627">
    <property type="term" value="C:cytosolic small ribosomal subunit"/>
    <property type="evidence" value="ECO:0007669"/>
    <property type="project" value="TreeGrafter"/>
</dbReference>
<dbReference type="GO" id="GO:0003723">
    <property type="term" value="F:RNA binding"/>
    <property type="evidence" value="ECO:0007669"/>
    <property type="project" value="TreeGrafter"/>
</dbReference>
<dbReference type="GO" id="GO:0003735">
    <property type="term" value="F:structural constituent of ribosome"/>
    <property type="evidence" value="ECO:0007669"/>
    <property type="project" value="InterPro"/>
</dbReference>
<dbReference type="GO" id="GO:0006412">
    <property type="term" value="P:translation"/>
    <property type="evidence" value="ECO:0007669"/>
    <property type="project" value="UniProtKB-UniRule"/>
</dbReference>
<dbReference type="FunFam" id="3.30.230.10:FF:000001">
    <property type="entry name" value="30S ribosomal protein S9"/>
    <property type="match status" value="1"/>
</dbReference>
<dbReference type="Gene3D" id="3.30.230.10">
    <property type="match status" value="1"/>
</dbReference>
<dbReference type="HAMAP" id="MF_00532_B">
    <property type="entry name" value="Ribosomal_uS9_B"/>
    <property type="match status" value="1"/>
</dbReference>
<dbReference type="InterPro" id="IPR020568">
    <property type="entry name" value="Ribosomal_Su5_D2-typ_SF"/>
</dbReference>
<dbReference type="InterPro" id="IPR000754">
    <property type="entry name" value="Ribosomal_uS9"/>
</dbReference>
<dbReference type="InterPro" id="IPR023035">
    <property type="entry name" value="Ribosomal_uS9_bac/plastid"/>
</dbReference>
<dbReference type="InterPro" id="IPR020574">
    <property type="entry name" value="Ribosomal_uS9_CS"/>
</dbReference>
<dbReference type="InterPro" id="IPR014721">
    <property type="entry name" value="Ribsml_uS5_D2-typ_fold_subgr"/>
</dbReference>
<dbReference type="NCBIfam" id="NF001099">
    <property type="entry name" value="PRK00132.1"/>
    <property type="match status" value="1"/>
</dbReference>
<dbReference type="PANTHER" id="PTHR21569">
    <property type="entry name" value="RIBOSOMAL PROTEIN S9"/>
    <property type="match status" value="1"/>
</dbReference>
<dbReference type="PANTHER" id="PTHR21569:SF1">
    <property type="entry name" value="SMALL RIBOSOMAL SUBUNIT PROTEIN US9M"/>
    <property type="match status" value="1"/>
</dbReference>
<dbReference type="Pfam" id="PF00380">
    <property type="entry name" value="Ribosomal_S9"/>
    <property type="match status" value="1"/>
</dbReference>
<dbReference type="SUPFAM" id="SSF54211">
    <property type="entry name" value="Ribosomal protein S5 domain 2-like"/>
    <property type="match status" value="1"/>
</dbReference>
<dbReference type="PROSITE" id="PS00360">
    <property type="entry name" value="RIBOSOMAL_S9"/>
    <property type="match status" value="1"/>
</dbReference>
<proteinExistence type="inferred from homology"/>
<feature type="chain" id="PRO_1000128134" description="Small ribosomal subunit protein uS9">
    <location>
        <begin position="1"/>
        <end position="130"/>
    </location>
</feature>
<feature type="region of interest" description="Disordered" evidence="2">
    <location>
        <begin position="98"/>
        <end position="130"/>
    </location>
</feature>
<feature type="compositionally biased region" description="Basic residues" evidence="2">
    <location>
        <begin position="111"/>
        <end position="130"/>
    </location>
</feature>
<organism>
    <name type="scientific">Lacticaseibacillus casei (strain BL23)</name>
    <name type="common">Lactobacillus casei</name>
    <dbReference type="NCBI Taxonomy" id="543734"/>
    <lineage>
        <taxon>Bacteria</taxon>
        <taxon>Bacillati</taxon>
        <taxon>Bacillota</taxon>
        <taxon>Bacilli</taxon>
        <taxon>Lactobacillales</taxon>
        <taxon>Lactobacillaceae</taxon>
        <taxon>Lacticaseibacillus</taxon>
    </lineage>
</organism>
<gene>
    <name evidence="1" type="primary">rpsI</name>
    <name type="ordered locus">LCABL_26320</name>
</gene>
<sequence>MAQVQYAGTGRRKNSVARVRLVPGTGKITMNGKDVRDYLPYENLITDLSQPFGITETTGSYDVLVNVNGGGFSGQAGATRHGIARALLTVDPDFRGPLKKAGMLTRDPRMKERKKYGLKKARKASQFSKR</sequence>
<reference key="1">
    <citation type="submission" date="2008-06" db="EMBL/GenBank/DDBJ databases">
        <title>Lactobacillus casei BL23 complete genome sequence.</title>
        <authorList>
            <person name="Maze A."/>
            <person name="Boel G."/>
            <person name="Bourand A."/>
            <person name="Loux V."/>
            <person name="Gibrat J.F."/>
            <person name="Zuniga M."/>
            <person name="Hartke A."/>
            <person name="Deutscher J."/>
        </authorList>
    </citation>
    <scope>NUCLEOTIDE SEQUENCE [LARGE SCALE GENOMIC DNA]</scope>
    <source>
        <strain>BL23</strain>
    </source>
</reference>
<accession>B3WAH9</accession>
<evidence type="ECO:0000255" key="1">
    <source>
        <dbReference type="HAMAP-Rule" id="MF_00532"/>
    </source>
</evidence>
<evidence type="ECO:0000256" key="2">
    <source>
        <dbReference type="SAM" id="MobiDB-lite"/>
    </source>
</evidence>
<evidence type="ECO:0000305" key="3"/>
<keyword id="KW-0687">Ribonucleoprotein</keyword>
<keyword id="KW-0689">Ribosomal protein</keyword>
<protein>
    <recommendedName>
        <fullName evidence="1">Small ribosomal subunit protein uS9</fullName>
    </recommendedName>
    <alternativeName>
        <fullName evidence="3">30S ribosomal protein S9</fullName>
    </alternativeName>
</protein>
<comment type="similarity">
    <text evidence="1">Belongs to the universal ribosomal protein uS9 family.</text>
</comment>
<name>RS9_LACCB</name>